<proteinExistence type="evidence at protein level"/>
<organism>
    <name type="scientific">Conus maioensis</name>
    <name type="common">Sea snail</name>
    <name type="synonym">Africonus maioensis</name>
    <dbReference type="NCBI Taxonomy" id="289039"/>
    <lineage>
        <taxon>Eukaryota</taxon>
        <taxon>Metazoa</taxon>
        <taxon>Spiralia</taxon>
        <taxon>Lophotrochozoa</taxon>
        <taxon>Mollusca</taxon>
        <taxon>Gastropoda</taxon>
        <taxon>Caenogastropoda</taxon>
        <taxon>Neogastropoda</taxon>
        <taxon>Conoidea</taxon>
        <taxon>Conidae</taxon>
        <taxon>Conus</taxon>
        <taxon>Lautoconus</taxon>
    </lineage>
</organism>
<protein>
    <recommendedName>
        <fullName evidence="4">Consomatin Mao1</fullName>
        <shortName evidence="4">ConSST Mao1</shortName>
    </recommendedName>
    <alternativeName>
        <fullName evidence="3">Consomatin Ma1</fullName>
    </alternativeName>
    <alternativeName>
        <fullName evidence="1">Somatostatin-related peptide</fullName>
        <shortName evidence="1">SSRP</shortName>
    </alternativeName>
</protein>
<name>CSST1_CONMH</name>
<accession>P0DW26</accession>
<comment type="function">
    <text evidence="1">Moderately activates human somatostatin receptors (SSTR) with a preferential activation of SSTR1 and SSTR4. In vivo, does not cause behavioral changes in mice within a few minutes of intracranial injection, but causes a progressive loss of movement thereafter. Four to five hours after injection, mice recover, even with the highest dose tested. Shows antinociception and antihyperalgesia activities in two mouse models of acute pain, most probably by acting outside the central nervous system.</text>
</comment>
<comment type="subcellular location">
    <subcellularLocation>
        <location evidence="5">Secreted</location>
    </subcellularLocation>
</comment>
<comment type="tissue specificity">
    <text evidence="5">Expressed by the venom duct.</text>
</comment>
<comment type="domain">
    <text evidence="4">The cysteine framework is C-C.</text>
</comment>
<comment type="miscellaneous">
    <text evidence="1">This peptide is an evolutionarily optimized stable analog of somatostatin. In addition, it adopts nearly identical conformations as in the somatostatin drug analog Octreotide. As this drug, it contains a D-Trp at the same position, whose synthesis is a common strategy used for enhancing the metabolic stability of compounds in drug design.</text>
</comment>
<comment type="miscellaneous">
    <text evidence="1">Consomatins evolved by gene duplication of a 'Somatostatin and related peptides (SSRP)' gene expressed in the snail neuroendocrine system.</text>
</comment>
<comment type="miscellaneous">
    <text evidence="1">Negative results: does not activate any of the other 313 GPCRs tested. Shows little or no activating activity at the SSTR2, SSTR3 and SSTR5.</text>
</comment>
<comment type="similarity">
    <text evidence="4">Belongs to the conotoxin C superfamily. Consomatin family.</text>
</comment>
<comment type="caution">
    <text evidence="4">The name 'Consomatin Ma1' is already given to a peptide from Conus magus, it is why we suggest to call this peptide 'Consomatin Mao1'.</text>
</comment>
<sequence>MQTASWVMVMMMVWITAPLSEGGKLNDVIRGLVPDDVTPQLILRSLFFHRPSDSVVRSTVPVHICYWKVCPPSPWRRPNGKG</sequence>
<evidence type="ECO:0000250" key="1">
    <source>
        <dbReference type="UniProtKB" id="P0DQT5"/>
    </source>
</evidence>
<evidence type="ECO:0000255" key="2"/>
<evidence type="ECO:0000303" key="3">
    <source>
    </source>
</evidence>
<evidence type="ECO:0000305" key="4"/>
<evidence type="ECO:0000305" key="5">
    <source>
    </source>
</evidence>
<dbReference type="GO" id="GO:0005576">
    <property type="term" value="C:extracellular region"/>
    <property type="evidence" value="ECO:0007669"/>
    <property type="project" value="UniProtKB-SubCell"/>
</dbReference>
<dbReference type="GO" id="GO:0090729">
    <property type="term" value="F:toxin activity"/>
    <property type="evidence" value="ECO:0007669"/>
    <property type="project" value="UniProtKB-KW"/>
</dbReference>
<keyword id="KW-0208">D-amino acid</keyword>
<keyword id="KW-1015">Disulfide bond</keyword>
<keyword id="KW-1213">G-protein coupled receptor impairing toxin</keyword>
<keyword id="KW-0379">Hydroxylation</keyword>
<keyword id="KW-0964">Secreted</keyword>
<keyword id="KW-0732">Signal</keyword>
<keyword id="KW-0800">Toxin</keyword>
<feature type="signal peptide" evidence="2">
    <location>
        <begin position="1"/>
        <end position="22"/>
    </location>
</feature>
<feature type="propeptide" id="PRO_0000456138" evidence="5">
    <location>
        <begin position="23"/>
        <end position="57"/>
    </location>
</feature>
<feature type="peptide" id="PRO_0000456139" description="Consomatin Mao1" evidence="5">
    <location>
        <begin position="58"/>
        <end position="74"/>
    </location>
</feature>
<feature type="propeptide" id="PRO_0000456140" evidence="5">
    <location>
        <begin position="75"/>
        <end position="82"/>
    </location>
</feature>
<feature type="modified residue" description="D-tryptophan" evidence="1 5">
    <location>
        <position position="67"/>
    </location>
</feature>
<feature type="modified residue" description="4-hydroxyproline" evidence="5">
    <location>
        <position position="71"/>
    </location>
</feature>
<feature type="modified residue" description="4-hydroxyproline" evidence="5">
    <location>
        <position position="72"/>
    </location>
</feature>
<feature type="modified residue" description="4-hydroxyproline" evidence="5">
    <location>
        <position position="74"/>
    </location>
</feature>
<feature type="disulfide bond" evidence="1">
    <location>
        <begin position="65"/>
        <end position="70"/>
    </location>
</feature>
<reference key="1">
    <citation type="journal article" date="2022" name="Sci. Adv.">
        <title>Somatostatin venom analogs evolved by fish-hunting cone snails: from prey capture behavior to identifying drug leads.</title>
        <authorList>
            <person name="Ramiro I.B.L."/>
            <person name="Bjoern-Yoshimoto W.E."/>
            <person name="Imperial J.S."/>
            <person name="Gajewiak J."/>
            <person name="Salcedo P.F."/>
            <person name="Watkins M."/>
            <person name="Taylor D."/>
            <person name="Resager W."/>
            <person name="Ueberheide B."/>
            <person name="Braeuner-Osborne H."/>
            <person name="Whitby F.G."/>
            <person name="Hill C.P."/>
            <person name="Martin L.F."/>
            <person name="Patwardhan A."/>
            <person name="Concepcion G.P."/>
            <person name="Olivera B.M."/>
            <person name="Safavi-Hemami H."/>
        </authorList>
    </citation>
    <scope>NUCLEOTIDE SEQUENCE [MRNA]</scope>
    <scope>PROBABLE D-AMINO ACID AT TRP-67</scope>
    <scope>PROBABLE HYDROXYLATION AT PRO-71</scope>
    <scope>PROBABLE HYDROXYLATION AT PRO-72</scope>
    <scope>PROBABLE HYDROXYLATION AT PRO-74</scope>
    <source>
        <tissue>Venom duct</tissue>
    </source>
</reference>